<accession>A4WHH6</accession>
<reference key="1">
    <citation type="submission" date="2007-04" db="EMBL/GenBank/DDBJ databases">
        <title>Complete sequence of Pyrobaculum arsenaticum DSM 13514.</title>
        <authorList>
            <consortium name="US DOE Joint Genome Institute"/>
            <person name="Copeland A."/>
            <person name="Lucas S."/>
            <person name="Lapidus A."/>
            <person name="Barry K."/>
            <person name="Glavina del Rio T."/>
            <person name="Dalin E."/>
            <person name="Tice H."/>
            <person name="Pitluck S."/>
            <person name="Chain P."/>
            <person name="Malfatti S."/>
            <person name="Shin M."/>
            <person name="Vergez L."/>
            <person name="Schmutz J."/>
            <person name="Larimer F."/>
            <person name="Land M."/>
            <person name="Hauser L."/>
            <person name="Kyrpides N."/>
            <person name="Mikhailova N."/>
            <person name="Cozen A.E."/>
            <person name="Fitz-Gibbon S.T."/>
            <person name="House C.H."/>
            <person name="Saltikov C."/>
            <person name="Lowe T.M."/>
            <person name="Richardson P."/>
        </authorList>
    </citation>
    <scope>NUCLEOTIDE SEQUENCE [LARGE SCALE GENOMIC DNA]</scope>
    <source>
        <strain>ATCC 700994 / DSM 13514 / JCM 11321 / PZ6</strain>
    </source>
</reference>
<feature type="chain" id="PRO_1000070393" description="Pyridoxal 5'-phosphate synthase subunit PdxS">
    <location>
        <begin position="1"/>
        <end position="337"/>
    </location>
</feature>
<feature type="active site" description="Schiff-base intermediate with D-ribose 5-phosphate" evidence="1">
    <location>
        <position position="122"/>
    </location>
</feature>
<feature type="binding site" evidence="1">
    <location>
        <position position="65"/>
    </location>
    <ligand>
        <name>D-ribose 5-phosphate</name>
        <dbReference type="ChEBI" id="CHEBI:78346"/>
    </ligand>
</feature>
<feature type="binding site" evidence="1">
    <location>
        <position position="194"/>
    </location>
    <ligand>
        <name>D-ribose 5-phosphate</name>
        <dbReference type="ChEBI" id="CHEBI:78346"/>
    </ligand>
</feature>
<feature type="binding site" evidence="1">
    <location>
        <position position="206"/>
    </location>
    <ligand>
        <name>D-glyceraldehyde 3-phosphate</name>
        <dbReference type="ChEBI" id="CHEBI:59776"/>
    </ligand>
</feature>
<feature type="binding site" evidence="1">
    <location>
        <position position="255"/>
    </location>
    <ligand>
        <name>D-ribose 5-phosphate</name>
        <dbReference type="ChEBI" id="CHEBI:78346"/>
    </ligand>
</feature>
<feature type="binding site" evidence="1">
    <location>
        <begin position="276"/>
        <end position="277"/>
    </location>
    <ligand>
        <name>D-ribose 5-phosphate</name>
        <dbReference type="ChEBI" id="CHEBI:78346"/>
    </ligand>
</feature>
<comment type="function">
    <text evidence="1">Catalyzes the formation of pyridoxal 5'-phosphate from ribose 5-phosphate (RBP), glyceraldehyde 3-phosphate (G3P) and ammonia. The ammonia is provided by the PdxT subunit. Can also use ribulose 5-phosphate and dihydroxyacetone phosphate as substrates, resulting from enzyme-catalyzed isomerization of RBP and G3P, respectively.</text>
</comment>
<comment type="catalytic activity">
    <reaction evidence="1">
        <text>aldehydo-D-ribose 5-phosphate + D-glyceraldehyde 3-phosphate + L-glutamine = pyridoxal 5'-phosphate + L-glutamate + phosphate + 3 H2O + H(+)</text>
        <dbReference type="Rhea" id="RHEA:31507"/>
        <dbReference type="ChEBI" id="CHEBI:15377"/>
        <dbReference type="ChEBI" id="CHEBI:15378"/>
        <dbReference type="ChEBI" id="CHEBI:29985"/>
        <dbReference type="ChEBI" id="CHEBI:43474"/>
        <dbReference type="ChEBI" id="CHEBI:58273"/>
        <dbReference type="ChEBI" id="CHEBI:58359"/>
        <dbReference type="ChEBI" id="CHEBI:59776"/>
        <dbReference type="ChEBI" id="CHEBI:597326"/>
        <dbReference type="EC" id="4.3.3.6"/>
    </reaction>
</comment>
<comment type="pathway">
    <text evidence="1">Cofactor biosynthesis; pyridoxal 5'-phosphate biosynthesis.</text>
</comment>
<comment type="subunit">
    <text evidence="1">In the presence of PdxT, forms a dodecamer of heterodimers.</text>
</comment>
<comment type="similarity">
    <text evidence="1">Belongs to the PdxS/SNZ family.</text>
</comment>
<sequence>MSVAGGLEYLEKLRDFFYGLAELRDRLKERGFTWPRPYPAEGVAAGTVKVKAGFPAMLRNGVIMDVTNVEQAQIAEEAGAVGVMVLDKLPYDVRKAGGVARMADLKVIEEVMSHVTIPVSAKVRIGHYYEAFLLQEIGVDLIDESEVLTPVDDQHHINKWLFTVPFVNGCRELCEALRRISEGASMIRSKGEAGTGNVSEAVKHFKALYRAINELAAAEEERLRDYARQCQAPLELVALTARLGRLPVITFAAGGIATPADAALMMWLGADGVFVGSGIFKSQDPRQRAEAIVLATAKWDDPEAVVEAQKMVSERAAMVGIDIKTLKPEELLQTRGL</sequence>
<proteinExistence type="inferred from homology"/>
<name>PDXS_PYRAR</name>
<gene>
    <name evidence="1" type="primary">pdxS</name>
    <name type="ordered locus">Pars_0228</name>
</gene>
<keyword id="KW-0456">Lyase</keyword>
<keyword id="KW-0663">Pyridoxal phosphate</keyword>
<keyword id="KW-0704">Schiff base</keyword>
<dbReference type="EC" id="4.3.3.6" evidence="1"/>
<dbReference type="EMBL" id="CP000660">
    <property type="protein sequence ID" value="ABP49843.1"/>
    <property type="molecule type" value="Genomic_DNA"/>
</dbReference>
<dbReference type="SMR" id="A4WHH6"/>
<dbReference type="STRING" id="340102.Pars_0228"/>
<dbReference type="KEGG" id="pas:Pars_0228"/>
<dbReference type="HOGENOM" id="CLU_055352_1_0_2"/>
<dbReference type="OrthoDB" id="6840at2157"/>
<dbReference type="PhylomeDB" id="A4WHH6"/>
<dbReference type="UniPathway" id="UPA00245"/>
<dbReference type="Proteomes" id="UP000001567">
    <property type="component" value="Chromosome"/>
</dbReference>
<dbReference type="GO" id="GO:0036381">
    <property type="term" value="F:pyridoxal 5'-phosphate synthase (glutamine hydrolysing) activity"/>
    <property type="evidence" value="ECO:0007669"/>
    <property type="project" value="UniProtKB-UniRule"/>
</dbReference>
<dbReference type="GO" id="GO:0006520">
    <property type="term" value="P:amino acid metabolic process"/>
    <property type="evidence" value="ECO:0007669"/>
    <property type="project" value="TreeGrafter"/>
</dbReference>
<dbReference type="GO" id="GO:0042823">
    <property type="term" value="P:pyridoxal phosphate biosynthetic process"/>
    <property type="evidence" value="ECO:0007669"/>
    <property type="project" value="UniProtKB-UniRule"/>
</dbReference>
<dbReference type="GO" id="GO:0008615">
    <property type="term" value="P:pyridoxine biosynthetic process"/>
    <property type="evidence" value="ECO:0007669"/>
    <property type="project" value="TreeGrafter"/>
</dbReference>
<dbReference type="CDD" id="cd04727">
    <property type="entry name" value="pdxS"/>
    <property type="match status" value="1"/>
</dbReference>
<dbReference type="FunFam" id="3.20.20.70:FF:000001">
    <property type="entry name" value="Pyridoxine biosynthesis protein PDX1"/>
    <property type="match status" value="1"/>
</dbReference>
<dbReference type="Gene3D" id="3.20.20.70">
    <property type="entry name" value="Aldolase class I"/>
    <property type="match status" value="1"/>
</dbReference>
<dbReference type="HAMAP" id="MF_01824">
    <property type="entry name" value="PdxS"/>
    <property type="match status" value="1"/>
</dbReference>
<dbReference type="InterPro" id="IPR013785">
    <property type="entry name" value="Aldolase_TIM"/>
</dbReference>
<dbReference type="InterPro" id="IPR001852">
    <property type="entry name" value="PdxS/SNZ"/>
</dbReference>
<dbReference type="InterPro" id="IPR033755">
    <property type="entry name" value="PdxS/SNZ_N"/>
</dbReference>
<dbReference type="InterPro" id="IPR011060">
    <property type="entry name" value="RibuloseP-bd_barrel"/>
</dbReference>
<dbReference type="NCBIfam" id="NF003215">
    <property type="entry name" value="PRK04180.1"/>
    <property type="match status" value="1"/>
</dbReference>
<dbReference type="PANTHER" id="PTHR31829">
    <property type="entry name" value="PYRIDOXAL 5'-PHOSPHATE SYNTHASE SUBUNIT SNZ1-RELATED"/>
    <property type="match status" value="1"/>
</dbReference>
<dbReference type="PANTHER" id="PTHR31829:SF0">
    <property type="entry name" value="PYRIDOXAL 5'-PHOSPHATE SYNTHASE SUBUNIT SNZ1-RELATED"/>
    <property type="match status" value="1"/>
</dbReference>
<dbReference type="Pfam" id="PF01680">
    <property type="entry name" value="SOR_SNZ"/>
    <property type="match status" value="1"/>
</dbReference>
<dbReference type="PIRSF" id="PIRSF029271">
    <property type="entry name" value="Pdx1"/>
    <property type="match status" value="1"/>
</dbReference>
<dbReference type="SUPFAM" id="SSF51366">
    <property type="entry name" value="Ribulose-phoshate binding barrel"/>
    <property type="match status" value="1"/>
</dbReference>
<dbReference type="PROSITE" id="PS01235">
    <property type="entry name" value="PDXS_SNZ_1"/>
    <property type="match status" value="1"/>
</dbReference>
<dbReference type="PROSITE" id="PS51129">
    <property type="entry name" value="PDXS_SNZ_2"/>
    <property type="match status" value="1"/>
</dbReference>
<evidence type="ECO:0000255" key="1">
    <source>
        <dbReference type="HAMAP-Rule" id="MF_01824"/>
    </source>
</evidence>
<protein>
    <recommendedName>
        <fullName evidence="1">Pyridoxal 5'-phosphate synthase subunit PdxS</fullName>
        <shortName evidence="1">PLP synthase subunit PdxS</shortName>
        <ecNumber evidence="1">4.3.3.6</ecNumber>
    </recommendedName>
    <alternativeName>
        <fullName evidence="1">Pdx1</fullName>
    </alternativeName>
</protein>
<organism>
    <name type="scientific">Pyrobaculum arsenaticum (strain DSM 13514 / JCM 11321 / PZ6)</name>
    <dbReference type="NCBI Taxonomy" id="340102"/>
    <lineage>
        <taxon>Archaea</taxon>
        <taxon>Thermoproteota</taxon>
        <taxon>Thermoprotei</taxon>
        <taxon>Thermoproteales</taxon>
        <taxon>Thermoproteaceae</taxon>
        <taxon>Pyrobaculum</taxon>
    </lineage>
</organism>